<keyword id="KW-1003">Cell membrane</keyword>
<keyword id="KW-0963">Cytoplasm</keyword>
<keyword id="KW-0342">GTP-binding</keyword>
<keyword id="KW-0472">Membrane</keyword>
<keyword id="KW-0547">Nucleotide-binding</keyword>
<keyword id="KW-0690">Ribosome biogenesis</keyword>
<keyword id="KW-0694">RNA-binding</keyword>
<keyword id="KW-0699">rRNA-binding</keyword>
<feature type="chain" id="PRO_1000079682" description="GTPase Era">
    <location>
        <begin position="1"/>
        <end position="309"/>
    </location>
</feature>
<feature type="domain" description="Era-type G" evidence="2">
    <location>
        <begin position="16"/>
        <end position="186"/>
    </location>
</feature>
<feature type="domain" description="KH type-2" evidence="1">
    <location>
        <begin position="217"/>
        <end position="294"/>
    </location>
</feature>
<feature type="region of interest" description="G1" evidence="2">
    <location>
        <begin position="24"/>
        <end position="31"/>
    </location>
</feature>
<feature type="region of interest" description="G2" evidence="2">
    <location>
        <begin position="50"/>
        <end position="54"/>
    </location>
</feature>
<feature type="region of interest" description="G3" evidence="2">
    <location>
        <begin position="71"/>
        <end position="74"/>
    </location>
</feature>
<feature type="region of interest" description="G4" evidence="2">
    <location>
        <begin position="133"/>
        <end position="136"/>
    </location>
</feature>
<feature type="region of interest" description="G5" evidence="2">
    <location>
        <begin position="164"/>
        <end position="166"/>
    </location>
</feature>
<feature type="binding site" evidence="1">
    <location>
        <begin position="24"/>
        <end position="31"/>
    </location>
    <ligand>
        <name>GTP</name>
        <dbReference type="ChEBI" id="CHEBI:37565"/>
    </ligand>
</feature>
<feature type="binding site" evidence="1">
    <location>
        <begin position="71"/>
        <end position="75"/>
    </location>
    <ligand>
        <name>GTP</name>
        <dbReference type="ChEBI" id="CHEBI:37565"/>
    </ligand>
</feature>
<feature type="binding site" evidence="1">
    <location>
        <begin position="133"/>
        <end position="136"/>
    </location>
    <ligand>
        <name>GTP</name>
        <dbReference type="ChEBI" id="CHEBI:37565"/>
    </ligand>
</feature>
<reference key="1">
    <citation type="submission" date="2006-04" db="EMBL/GenBank/DDBJ databases">
        <title>Complete sequence of chromosome of Deinococcus geothermalis DSM 11300.</title>
        <authorList>
            <person name="Copeland A."/>
            <person name="Lucas S."/>
            <person name="Lapidus A."/>
            <person name="Barry K."/>
            <person name="Detter J.C."/>
            <person name="Glavina del Rio T."/>
            <person name="Hammon N."/>
            <person name="Israni S."/>
            <person name="Dalin E."/>
            <person name="Tice H."/>
            <person name="Pitluck S."/>
            <person name="Brettin T."/>
            <person name="Bruce D."/>
            <person name="Han C."/>
            <person name="Tapia R."/>
            <person name="Saunders E."/>
            <person name="Gilna P."/>
            <person name="Schmutz J."/>
            <person name="Larimer F."/>
            <person name="Land M."/>
            <person name="Hauser L."/>
            <person name="Kyrpides N."/>
            <person name="Kim E."/>
            <person name="Daly M.J."/>
            <person name="Fredrickson J.K."/>
            <person name="Makarova K.S."/>
            <person name="Gaidamakova E.K."/>
            <person name="Zhai M."/>
            <person name="Richardson P."/>
        </authorList>
    </citation>
    <scope>NUCLEOTIDE SEQUENCE [LARGE SCALE GENOMIC DNA]</scope>
    <source>
        <strain>DSM 11300 / CIP 105573 / AG-3a</strain>
    </source>
</reference>
<evidence type="ECO:0000255" key="1">
    <source>
        <dbReference type="HAMAP-Rule" id="MF_00367"/>
    </source>
</evidence>
<evidence type="ECO:0000255" key="2">
    <source>
        <dbReference type="PROSITE-ProRule" id="PRU01050"/>
    </source>
</evidence>
<gene>
    <name evidence="1" type="primary">era</name>
    <name type="ordered locus">Dgeo_1825</name>
</gene>
<accession>Q1IXB4</accession>
<sequence length="309" mass="34592">MTDQSLSPESGETPTHAGFVAIVGKPNVGKSTLLNAFLNTKVAPTSPRPQTTRRGVRGIYSTDTQQIVFVDTPGLHKPKDALGKYMNQEVQSALADVDAILWVVDLRHPPTEEDELVARQVRDLPKPLFLIGNKVDAAKYPDEAMRLYRALLEGRTGETHERMLSAQNSPQAVAALREQILDALPENPFFFPRSSASDQTREQWAAEIIREEAMKRLREELPYAVATRVTNWTEREDGLQRIEAELIVEKNAHKGMVIGAGGKMLREIGQAARKQLEVFLNCKVFLGLEVIVIPGWREDEEALRELGYE</sequence>
<name>ERA_DEIGD</name>
<protein>
    <recommendedName>
        <fullName evidence="1">GTPase Era</fullName>
    </recommendedName>
</protein>
<comment type="function">
    <text evidence="1">An essential GTPase that binds both GDP and GTP, with rapid nucleotide exchange. Plays a role in 16S rRNA processing and 30S ribosomal subunit biogenesis and possibly also in cell cycle regulation and energy metabolism.</text>
</comment>
<comment type="subunit">
    <text evidence="1">Monomer.</text>
</comment>
<comment type="subcellular location">
    <subcellularLocation>
        <location>Cytoplasm</location>
    </subcellularLocation>
    <subcellularLocation>
        <location evidence="1">Cell membrane</location>
        <topology evidence="1">Peripheral membrane protein</topology>
    </subcellularLocation>
</comment>
<comment type="similarity">
    <text evidence="1 2">Belongs to the TRAFAC class TrmE-Era-EngA-EngB-Septin-like GTPase superfamily. Era GTPase family.</text>
</comment>
<dbReference type="EMBL" id="CP000359">
    <property type="protein sequence ID" value="ABF46120.1"/>
    <property type="molecule type" value="Genomic_DNA"/>
</dbReference>
<dbReference type="RefSeq" id="WP_011530950.1">
    <property type="nucleotide sequence ID" value="NC_008025.1"/>
</dbReference>
<dbReference type="SMR" id="Q1IXB4"/>
<dbReference type="STRING" id="319795.Dgeo_1825"/>
<dbReference type="KEGG" id="dge:Dgeo_1825"/>
<dbReference type="eggNOG" id="COG1159">
    <property type="taxonomic scope" value="Bacteria"/>
</dbReference>
<dbReference type="HOGENOM" id="CLU_038009_1_0_0"/>
<dbReference type="Proteomes" id="UP000002431">
    <property type="component" value="Chromosome"/>
</dbReference>
<dbReference type="GO" id="GO:0005829">
    <property type="term" value="C:cytosol"/>
    <property type="evidence" value="ECO:0007669"/>
    <property type="project" value="TreeGrafter"/>
</dbReference>
<dbReference type="GO" id="GO:0005886">
    <property type="term" value="C:plasma membrane"/>
    <property type="evidence" value="ECO:0007669"/>
    <property type="project" value="UniProtKB-SubCell"/>
</dbReference>
<dbReference type="GO" id="GO:0005525">
    <property type="term" value="F:GTP binding"/>
    <property type="evidence" value="ECO:0007669"/>
    <property type="project" value="UniProtKB-UniRule"/>
</dbReference>
<dbReference type="GO" id="GO:0003924">
    <property type="term" value="F:GTPase activity"/>
    <property type="evidence" value="ECO:0007669"/>
    <property type="project" value="UniProtKB-UniRule"/>
</dbReference>
<dbReference type="GO" id="GO:0043024">
    <property type="term" value="F:ribosomal small subunit binding"/>
    <property type="evidence" value="ECO:0007669"/>
    <property type="project" value="TreeGrafter"/>
</dbReference>
<dbReference type="GO" id="GO:0070181">
    <property type="term" value="F:small ribosomal subunit rRNA binding"/>
    <property type="evidence" value="ECO:0007669"/>
    <property type="project" value="UniProtKB-UniRule"/>
</dbReference>
<dbReference type="GO" id="GO:0000028">
    <property type="term" value="P:ribosomal small subunit assembly"/>
    <property type="evidence" value="ECO:0007669"/>
    <property type="project" value="TreeGrafter"/>
</dbReference>
<dbReference type="CDD" id="cd04163">
    <property type="entry name" value="Era"/>
    <property type="match status" value="1"/>
</dbReference>
<dbReference type="CDD" id="cd22534">
    <property type="entry name" value="KH-II_Era"/>
    <property type="match status" value="1"/>
</dbReference>
<dbReference type="Gene3D" id="3.30.300.20">
    <property type="match status" value="1"/>
</dbReference>
<dbReference type="Gene3D" id="3.40.50.300">
    <property type="entry name" value="P-loop containing nucleotide triphosphate hydrolases"/>
    <property type="match status" value="1"/>
</dbReference>
<dbReference type="HAMAP" id="MF_00367">
    <property type="entry name" value="GTPase_Era"/>
    <property type="match status" value="1"/>
</dbReference>
<dbReference type="InterPro" id="IPR030388">
    <property type="entry name" value="G_ERA_dom"/>
</dbReference>
<dbReference type="InterPro" id="IPR006073">
    <property type="entry name" value="GTP-bd"/>
</dbReference>
<dbReference type="InterPro" id="IPR005662">
    <property type="entry name" value="GTPase_Era-like"/>
</dbReference>
<dbReference type="InterPro" id="IPR015946">
    <property type="entry name" value="KH_dom-like_a/b"/>
</dbReference>
<dbReference type="InterPro" id="IPR004044">
    <property type="entry name" value="KH_dom_type_2"/>
</dbReference>
<dbReference type="InterPro" id="IPR009019">
    <property type="entry name" value="KH_sf_prok-type"/>
</dbReference>
<dbReference type="InterPro" id="IPR027417">
    <property type="entry name" value="P-loop_NTPase"/>
</dbReference>
<dbReference type="InterPro" id="IPR005225">
    <property type="entry name" value="Small_GTP-bd"/>
</dbReference>
<dbReference type="NCBIfam" id="TIGR00436">
    <property type="entry name" value="era"/>
    <property type="match status" value="1"/>
</dbReference>
<dbReference type="NCBIfam" id="NF000908">
    <property type="entry name" value="PRK00089.1"/>
    <property type="match status" value="1"/>
</dbReference>
<dbReference type="NCBIfam" id="TIGR00231">
    <property type="entry name" value="small_GTP"/>
    <property type="match status" value="1"/>
</dbReference>
<dbReference type="PANTHER" id="PTHR42698">
    <property type="entry name" value="GTPASE ERA"/>
    <property type="match status" value="1"/>
</dbReference>
<dbReference type="PANTHER" id="PTHR42698:SF1">
    <property type="entry name" value="GTPASE ERA, MITOCHONDRIAL"/>
    <property type="match status" value="1"/>
</dbReference>
<dbReference type="Pfam" id="PF07650">
    <property type="entry name" value="KH_2"/>
    <property type="match status" value="1"/>
</dbReference>
<dbReference type="Pfam" id="PF01926">
    <property type="entry name" value="MMR_HSR1"/>
    <property type="match status" value="1"/>
</dbReference>
<dbReference type="PRINTS" id="PR00326">
    <property type="entry name" value="GTP1OBG"/>
</dbReference>
<dbReference type="SUPFAM" id="SSF52540">
    <property type="entry name" value="P-loop containing nucleoside triphosphate hydrolases"/>
    <property type="match status" value="1"/>
</dbReference>
<dbReference type="SUPFAM" id="SSF54814">
    <property type="entry name" value="Prokaryotic type KH domain (KH-domain type II)"/>
    <property type="match status" value="1"/>
</dbReference>
<dbReference type="PROSITE" id="PS51713">
    <property type="entry name" value="G_ERA"/>
    <property type="match status" value="1"/>
</dbReference>
<dbReference type="PROSITE" id="PS50823">
    <property type="entry name" value="KH_TYPE_2"/>
    <property type="match status" value="1"/>
</dbReference>
<organism>
    <name type="scientific">Deinococcus geothermalis (strain DSM 11300 / CIP 105573 / AG-3a)</name>
    <dbReference type="NCBI Taxonomy" id="319795"/>
    <lineage>
        <taxon>Bacteria</taxon>
        <taxon>Thermotogati</taxon>
        <taxon>Deinococcota</taxon>
        <taxon>Deinococci</taxon>
        <taxon>Deinococcales</taxon>
        <taxon>Deinococcaceae</taxon>
        <taxon>Deinococcus</taxon>
    </lineage>
</organism>
<proteinExistence type="inferred from homology"/>